<dbReference type="EC" id="6.1.1.5" evidence="1"/>
<dbReference type="EMBL" id="CP000285">
    <property type="protein sequence ID" value="ABE57843.1"/>
    <property type="molecule type" value="Genomic_DNA"/>
</dbReference>
<dbReference type="RefSeq" id="WP_011505789.1">
    <property type="nucleotide sequence ID" value="NC_007963.1"/>
</dbReference>
<dbReference type="SMR" id="Q1R0B5"/>
<dbReference type="STRING" id="290398.Csal_0481"/>
<dbReference type="GeneID" id="95333234"/>
<dbReference type="KEGG" id="csa:Csal_0481"/>
<dbReference type="eggNOG" id="COG0060">
    <property type="taxonomic scope" value="Bacteria"/>
</dbReference>
<dbReference type="HOGENOM" id="CLU_001493_7_1_6"/>
<dbReference type="OrthoDB" id="9810365at2"/>
<dbReference type="Proteomes" id="UP000000239">
    <property type="component" value="Chromosome"/>
</dbReference>
<dbReference type="GO" id="GO:0005829">
    <property type="term" value="C:cytosol"/>
    <property type="evidence" value="ECO:0007669"/>
    <property type="project" value="TreeGrafter"/>
</dbReference>
<dbReference type="GO" id="GO:0002161">
    <property type="term" value="F:aminoacyl-tRNA deacylase activity"/>
    <property type="evidence" value="ECO:0007669"/>
    <property type="project" value="InterPro"/>
</dbReference>
<dbReference type="GO" id="GO:0005524">
    <property type="term" value="F:ATP binding"/>
    <property type="evidence" value="ECO:0007669"/>
    <property type="project" value="UniProtKB-UniRule"/>
</dbReference>
<dbReference type="GO" id="GO:0004822">
    <property type="term" value="F:isoleucine-tRNA ligase activity"/>
    <property type="evidence" value="ECO:0007669"/>
    <property type="project" value="UniProtKB-UniRule"/>
</dbReference>
<dbReference type="GO" id="GO:0000049">
    <property type="term" value="F:tRNA binding"/>
    <property type="evidence" value="ECO:0007669"/>
    <property type="project" value="InterPro"/>
</dbReference>
<dbReference type="GO" id="GO:0008270">
    <property type="term" value="F:zinc ion binding"/>
    <property type="evidence" value="ECO:0007669"/>
    <property type="project" value="UniProtKB-UniRule"/>
</dbReference>
<dbReference type="GO" id="GO:0006428">
    <property type="term" value="P:isoleucyl-tRNA aminoacylation"/>
    <property type="evidence" value="ECO:0007669"/>
    <property type="project" value="UniProtKB-UniRule"/>
</dbReference>
<dbReference type="CDD" id="cd07960">
    <property type="entry name" value="Anticodon_Ia_Ile_BEm"/>
    <property type="match status" value="1"/>
</dbReference>
<dbReference type="CDD" id="cd00818">
    <property type="entry name" value="IleRS_core"/>
    <property type="match status" value="1"/>
</dbReference>
<dbReference type="FunFam" id="1.10.730.20:FF:000001">
    <property type="entry name" value="Isoleucine--tRNA ligase"/>
    <property type="match status" value="1"/>
</dbReference>
<dbReference type="FunFam" id="3.40.50.620:FF:000042">
    <property type="entry name" value="Isoleucine--tRNA ligase"/>
    <property type="match status" value="1"/>
</dbReference>
<dbReference type="FunFam" id="3.40.50.620:FF:000048">
    <property type="entry name" value="Isoleucine--tRNA ligase"/>
    <property type="match status" value="1"/>
</dbReference>
<dbReference type="Gene3D" id="1.10.730.20">
    <property type="match status" value="1"/>
</dbReference>
<dbReference type="Gene3D" id="3.40.50.620">
    <property type="entry name" value="HUPs"/>
    <property type="match status" value="2"/>
</dbReference>
<dbReference type="Gene3D" id="1.10.10.830">
    <property type="entry name" value="Ile-tRNA synthetase CP2 domain-like"/>
    <property type="match status" value="1"/>
</dbReference>
<dbReference type="Gene3D" id="3.90.740.10">
    <property type="entry name" value="Valyl/Leucyl/Isoleucyl-tRNA synthetase, editing domain"/>
    <property type="match status" value="1"/>
</dbReference>
<dbReference type="HAMAP" id="MF_02002">
    <property type="entry name" value="Ile_tRNA_synth_type1"/>
    <property type="match status" value="1"/>
</dbReference>
<dbReference type="InterPro" id="IPR001412">
    <property type="entry name" value="aa-tRNA-synth_I_CS"/>
</dbReference>
<dbReference type="InterPro" id="IPR002300">
    <property type="entry name" value="aa-tRNA-synth_Ia"/>
</dbReference>
<dbReference type="InterPro" id="IPR033708">
    <property type="entry name" value="Anticodon_Ile_BEm"/>
</dbReference>
<dbReference type="InterPro" id="IPR002301">
    <property type="entry name" value="Ile-tRNA-ligase"/>
</dbReference>
<dbReference type="InterPro" id="IPR023585">
    <property type="entry name" value="Ile-tRNA-ligase_type1"/>
</dbReference>
<dbReference type="InterPro" id="IPR050081">
    <property type="entry name" value="Ile-tRNA_ligase"/>
</dbReference>
<dbReference type="InterPro" id="IPR013155">
    <property type="entry name" value="M/V/L/I-tRNA-synth_anticd-bd"/>
</dbReference>
<dbReference type="InterPro" id="IPR014729">
    <property type="entry name" value="Rossmann-like_a/b/a_fold"/>
</dbReference>
<dbReference type="InterPro" id="IPR009080">
    <property type="entry name" value="tRNAsynth_Ia_anticodon-bd"/>
</dbReference>
<dbReference type="InterPro" id="IPR009008">
    <property type="entry name" value="Val/Leu/Ile-tRNA-synth_edit"/>
</dbReference>
<dbReference type="InterPro" id="IPR010663">
    <property type="entry name" value="Znf_FPG/IleRS"/>
</dbReference>
<dbReference type="NCBIfam" id="TIGR00392">
    <property type="entry name" value="ileS"/>
    <property type="match status" value="1"/>
</dbReference>
<dbReference type="PANTHER" id="PTHR42765:SF1">
    <property type="entry name" value="ISOLEUCINE--TRNA LIGASE, MITOCHONDRIAL"/>
    <property type="match status" value="1"/>
</dbReference>
<dbReference type="PANTHER" id="PTHR42765">
    <property type="entry name" value="SOLEUCYL-TRNA SYNTHETASE"/>
    <property type="match status" value="1"/>
</dbReference>
<dbReference type="Pfam" id="PF08264">
    <property type="entry name" value="Anticodon_1"/>
    <property type="match status" value="1"/>
</dbReference>
<dbReference type="Pfam" id="PF00133">
    <property type="entry name" value="tRNA-synt_1"/>
    <property type="match status" value="1"/>
</dbReference>
<dbReference type="Pfam" id="PF06827">
    <property type="entry name" value="zf-FPG_IleRS"/>
    <property type="match status" value="1"/>
</dbReference>
<dbReference type="PRINTS" id="PR00984">
    <property type="entry name" value="TRNASYNTHILE"/>
</dbReference>
<dbReference type="SUPFAM" id="SSF47323">
    <property type="entry name" value="Anticodon-binding domain of a subclass of class I aminoacyl-tRNA synthetases"/>
    <property type="match status" value="1"/>
</dbReference>
<dbReference type="SUPFAM" id="SSF52374">
    <property type="entry name" value="Nucleotidylyl transferase"/>
    <property type="match status" value="1"/>
</dbReference>
<dbReference type="SUPFAM" id="SSF50677">
    <property type="entry name" value="ValRS/IleRS/LeuRS editing domain"/>
    <property type="match status" value="1"/>
</dbReference>
<dbReference type="PROSITE" id="PS00178">
    <property type="entry name" value="AA_TRNA_LIGASE_I"/>
    <property type="match status" value="1"/>
</dbReference>
<comment type="function">
    <text evidence="1">Catalyzes the attachment of isoleucine to tRNA(Ile). As IleRS can inadvertently accommodate and process structurally similar amino acids such as valine, to avoid such errors it has two additional distinct tRNA(Ile)-dependent editing activities. One activity is designated as 'pretransfer' editing and involves the hydrolysis of activated Val-AMP. The other activity is designated 'posttransfer' editing and involves deacylation of mischarged Val-tRNA(Ile).</text>
</comment>
<comment type="catalytic activity">
    <reaction evidence="1">
        <text>tRNA(Ile) + L-isoleucine + ATP = L-isoleucyl-tRNA(Ile) + AMP + diphosphate</text>
        <dbReference type="Rhea" id="RHEA:11060"/>
        <dbReference type="Rhea" id="RHEA-COMP:9666"/>
        <dbReference type="Rhea" id="RHEA-COMP:9695"/>
        <dbReference type="ChEBI" id="CHEBI:30616"/>
        <dbReference type="ChEBI" id="CHEBI:33019"/>
        <dbReference type="ChEBI" id="CHEBI:58045"/>
        <dbReference type="ChEBI" id="CHEBI:78442"/>
        <dbReference type="ChEBI" id="CHEBI:78528"/>
        <dbReference type="ChEBI" id="CHEBI:456215"/>
        <dbReference type="EC" id="6.1.1.5"/>
    </reaction>
</comment>
<comment type="cofactor">
    <cofactor evidence="1">
        <name>Zn(2+)</name>
        <dbReference type="ChEBI" id="CHEBI:29105"/>
    </cofactor>
    <text evidence="1">Binds 1 zinc ion per subunit.</text>
</comment>
<comment type="subunit">
    <text evidence="1">Monomer.</text>
</comment>
<comment type="subcellular location">
    <subcellularLocation>
        <location evidence="1">Cytoplasm</location>
    </subcellularLocation>
</comment>
<comment type="domain">
    <text evidence="1">IleRS has two distinct active sites: one for aminoacylation and one for editing. The misactivated valine is translocated from the active site to the editing site, which sterically excludes the correctly activated isoleucine. The single editing site contains two valyl binding pockets, one specific for each substrate (Val-AMP or Val-tRNA(Ile)).</text>
</comment>
<comment type="similarity">
    <text evidence="1">Belongs to the class-I aminoacyl-tRNA synthetase family. IleS type 1 subfamily.</text>
</comment>
<name>SYI_CHRSD</name>
<feature type="chain" id="PRO_1000022057" description="Isoleucine--tRNA ligase">
    <location>
        <begin position="1"/>
        <end position="946"/>
    </location>
</feature>
<feature type="short sequence motif" description="'HIGH' region">
    <location>
        <begin position="58"/>
        <end position="68"/>
    </location>
</feature>
<feature type="short sequence motif" description="'KMSKS' region">
    <location>
        <begin position="609"/>
        <end position="613"/>
    </location>
</feature>
<feature type="binding site" evidence="1">
    <location>
        <position position="568"/>
    </location>
    <ligand>
        <name>L-isoleucyl-5'-AMP</name>
        <dbReference type="ChEBI" id="CHEBI:178002"/>
    </ligand>
</feature>
<feature type="binding site" evidence="1">
    <location>
        <position position="612"/>
    </location>
    <ligand>
        <name>ATP</name>
        <dbReference type="ChEBI" id="CHEBI:30616"/>
    </ligand>
</feature>
<feature type="binding site" evidence="1">
    <location>
        <position position="908"/>
    </location>
    <ligand>
        <name>Zn(2+)</name>
        <dbReference type="ChEBI" id="CHEBI:29105"/>
    </ligand>
</feature>
<feature type="binding site" evidence="1">
    <location>
        <position position="911"/>
    </location>
    <ligand>
        <name>Zn(2+)</name>
        <dbReference type="ChEBI" id="CHEBI:29105"/>
    </ligand>
</feature>
<feature type="binding site" evidence="1">
    <location>
        <position position="928"/>
    </location>
    <ligand>
        <name>Zn(2+)</name>
        <dbReference type="ChEBI" id="CHEBI:29105"/>
    </ligand>
</feature>
<feature type="binding site" evidence="1">
    <location>
        <position position="931"/>
    </location>
    <ligand>
        <name>Zn(2+)</name>
        <dbReference type="ChEBI" id="CHEBI:29105"/>
    </ligand>
</feature>
<protein>
    <recommendedName>
        <fullName evidence="1">Isoleucine--tRNA ligase</fullName>
        <ecNumber evidence="1">6.1.1.5</ecNumber>
    </recommendedName>
    <alternativeName>
        <fullName evidence="1">Isoleucyl-tRNA synthetase</fullName>
        <shortName evidence="1">IleRS</shortName>
    </alternativeName>
</protein>
<accession>Q1R0B5</accession>
<reference key="1">
    <citation type="journal article" date="2011" name="Stand. Genomic Sci.">
        <title>Complete genome sequence of the halophilic and highly halotolerant Chromohalobacter salexigens type strain (1H11(T)).</title>
        <authorList>
            <person name="Copeland A."/>
            <person name="O'Connor K."/>
            <person name="Lucas S."/>
            <person name="Lapidus A."/>
            <person name="Berry K.W."/>
            <person name="Detter J.C."/>
            <person name="Del Rio T.G."/>
            <person name="Hammon N."/>
            <person name="Dalin E."/>
            <person name="Tice H."/>
            <person name="Pitluck S."/>
            <person name="Bruce D."/>
            <person name="Goodwin L."/>
            <person name="Han C."/>
            <person name="Tapia R."/>
            <person name="Saunders E."/>
            <person name="Schmutz J."/>
            <person name="Brettin T."/>
            <person name="Larimer F."/>
            <person name="Land M."/>
            <person name="Hauser L."/>
            <person name="Vargas C."/>
            <person name="Nieto J.J."/>
            <person name="Kyrpides N.C."/>
            <person name="Ivanova N."/>
            <person name="Goker M."/>
            <person name="Klenk H.P."/>
            <person name="Csonka L.N."/>
            <person name="Woyke T."/>
        </authorList>
    </citation>
    <scope>NUCLEOTIDE SEQUENCE [LARGE SCALE GENOMIC DNA]</scope>
    <source>
        <strain>ATCC BAA-138 / DSM 3043 / CIP 106854 / NCIMB 13768 / 1H11</strain>
    </source>
</reference>
<keyword id="KW-0030">Aminoacyl-tRNA synthetase</keyword>
<keyword id="KW-0067">ATP-binding</keyword>
<keyword id="KW-0963">Cytoplasm</keyword>
<keyword id="KW-0436">Ligase</keyword>
<keyword id="KW-0479">Metal-binding</keyword>
<keyword id="KW-0547">Nucleotide-binding</keyword>
<keyword id="KW-0648">Protein biosynthesis</keyword>
<keyword id="KW-1185">Reference proteome</keyword>
<keyword id="KW-0862">Zinc</keyword>
<evidence type="ECO:0000255" key="1">
    <source>
        <dbReference type="HAMAP-Rule" id="MF_02002"/>
    </source>
</evidence>
<proteinExistence type="inferred from homology"/>
<gene>
    <name evidence="1" type="primary">ileS</name>
    <name type="ordered locus">Csal_0481</name>
</gene>
<organism>
    <name type="scientific">Chromohalobacter salexigens (strain ATCC BAA-138 / DSM 3043 / CIP 106854 / NCIMB 13768 / 1H11)</name>
    <dbReference type="NCBI Taxonomy" id="290398"/>
    <lineage>
        <taxon>Bacteria</taxon>
        <taxon>Pseudomonadati</taxon>
        <taxon>Pseudomonadota</taxon>
        <taxon>Gammaproteobacteria</taxon>
        <taxon>Oceanospirillales</taxon>
        <taxon>Halomonadaceae</taxon>
        <taxon>Chromohalobacter</taxon>
    </lineage>
</organism>
<sequence>MSDYKHTLNLPETDFPMRGMLPKREPGRVSQWQDMNLYQRLRDARAGREVFVLHDGPPYANGSIHIGHAVNKILKDIVVKSKSLAGYDAPYVPGWDCHGLPIEHKVETTHGKHLEADEARGLCREYAGAQIEGQKTDFVRLGVVGDWENPYRTMDFANEAGEIRALAKMVEGGYVFKGLKPVNWCFDCGSALAEAEVEYADKKSDAIDVAFAAAEPEALASAFGLASLDKPAAIVIWTTTPWTIPANQALNVHPDFTYALVDTGELLLVLAEELVESCLTRYGLEGDVVATAAGASLEFITFRHPFYERVAPVYLADYVTVEEGSTGIVHSAPSYGLDDFMTCREHGMSFDDMLNPVQGNGVYRDDLPLFGGQMIWKANPHIVDTLREVNALMAHTPITHSYMHCWRHKTPVIYRATAQWFVGMDREDDQGRTLRQRALDGVEATQFIPAWGKARLHSMIANRPDWCISRQRNWGVPIPFFMHKQTGEWHPRTVELMEDVARRVEAEGIDAWFRLDARELLGDEADQYDKVTDTLDVWFDSGTTHRHVMRGSHPMGHDQGPRADLYLEGSDQHRGWFHSSLLTGCAIDGHAPYKALLTHGFTVDEKGRKMSKSMGNVIAPQQVMDKLGADILRLWVASTDYSGEMAVSDEILKRTADVYRRIRNTSRFLLANLNGFAPERDAVAFEDMLALDQWVVDRAAQLQARIQGAYAEYRFRDVYQQVHDFCAHELGGFYLDVIKDRQYTTQADSRSRRSCQTALYHVVEALVRWVAPILSFTAEEIYEVIPGTRGDSVLLEEYYPHLATLEANAAMGREFWSRVLTVKQAVNKCLEDARNAKVVRNSLAAEVTLYADDSLRETLTQLGEELRFVLLTSEVHLASLEDAGSAQAEASELEGLKVAVVSSPHAKCERCWHHRADVGTHAADPNLCGRCLSNLPEGPGETRRYA</sequence>